<protein>
    <recommendedName>
        <fullName>Pregnancy-associated glycoprotein 62</fullName>
        <shortName>PAG 62</shortName>
        <ecNumber>3.4.23.-</ecNumber>
    </recommendedName>
</protein>
<proteinExistence type="evidence at protein level"/>
<comment type="tissue specificity">
    <text>Placenta.</text>
</comment>
<comment type="PTM">
    <text evidence="1">Glycosylated.</text>
</comment>
<comment type="similarity">
    <text evidence="1">Belongs to the peptidase A1 family.</text>
</comment>
<organism>
    <name type="scientific">Capra hircus</name>
    <name type="common">Goat</name>
    <dbReference type="NCBI Taxonomy" id="9925"/>
    <lineage>
        <taxon>Eukaryota</taxon>
        <taxon>Metazoa</taxon>
        <taxon>Chordata</taxon>
        <taxon>Craniata</taxon>
        <taxon>Vertebrata</taxon>
        <taxon>Euteleostomi</taxon>
        <taxon>Mammalia</taxon>
        <taxon>Eutheria</taxon>
        <taxon>Laurasiatheria</taxon>
        <taxon>Artiodactyla</taxon>
        <taxon>Ruminantia</taxon>
        <taxon>Pecora</taxon>
        <taxon>Bovidae</taxon>
        <taxon>Caprinae</taxon>
        <taxon>Capra</taxon>
    </lineage>
</organism>
<evidence type="ECO:0000305" key="1"/>
<accession>P80933</accession>
<sequence>RDSXVTIVPLRNMRDIVYVGXITIGTP</sequence>
<name>PAG62_CAPHI</name>
<dbReference type="EC" id="3.4.23.-"/>
<dbReference type="MEROPS" id="A01.077"/>
<dbReference type="Proteomes" id="UP000291000">
    <property type="component" value="Unassembled WGS sequence"/>
</dbReference>
<dbReference type="Proteomes" id="UP000694566">
    <property type="component" value="Unplaced"/>
</dbReference>
<dbReference type="GO" id="GO:0004190">
    <property type="term" value="F:aspartic-type endopeptidase activity"/>
    <property type="evidence" value="ECO:0007669"/>
    <property type="project" value="UniProtKB-KW"/>
</dbReference>
<dbReference type="GO" id="GO:0006508">
    <property type="term" value="P:proteolysis"/>
    <property type="evidence" value="ECO:0007669"/>
    <property type="project" value="UniProtKB-KW"/>
</dbReference>
<feature type="chain" id="PRO_0000199531" description="Pregnancy-associated glycoprotein 62">
    <location>
        <begin position="1"/>
        <end position="27" status="greater than"/>
    </location>
</feature>
<feature type="non-terminal residue">
    <location>
        <position position="27"/>
    </location>
</feature>
<reference key="1">
    <citation type="journal article" date="1998" name="Biol. Reprod.">
        <title>Isolation and partial characterization of a pregnancy-associated glycoprotein family from the goat placenta.</title>
        <authorList>
            <person name="Garbayo J.M."/>
            <person name="Remy B."/>
            <person name="Alabart J.L."/>
            <person name="Folch J."/>
            <person name="Wattiez R."/>
            <person name="Falmagne P."/>
            <person name="Beckers J.-F.M.P."/>
        </authorList>
    </citation>
    <scope>PROTEIN SEQUENCE</scope>
    <source>
        <tissue>Placenta</tissue>
    </source>
</reference>
<keyword id="KW-0064">Aspartyl protease</keyword>
<keyword id="KW-0903">Direct protein sequencing</keyword>
<keyword id="KW-0325">Glycoprotein</keyword>
<keyword id="KW-0378">Hydrolase</keyword>
<keyword id="KW-0645">Protease</keyword>
<keyword id="KW-1185">Reference proteome</keyword>
<gene>
    <name type="primary">PAG62</name>
</gene>